<accession>Q32RF7</accession>
<name>CYST_ZYGCR</name>
<dbReference type="EMBL" id="AY958086">
    <property type="protein sequence ID" value="AAX45809.1"/>
    <property type="molecule type" value="Genomic_DNA"/>
</dbReference>
<dbReference type="RefSeq" id="YP_636569.1">
    <property type="nucleotide sequence ID" value="NC_008117.1"/>
</dbReference>
<dbReference type="SMR" id="Q32RF7"/>
<dbReference type="GeneID" id="4108129"/>
<dbReference type="GO" id="GO:0031969">
    <property type="term" value="C:chloroplast membrane"/>
    <property type="evidence" value="ECO:0007669"/>
    <property type="project" value="UniProtKB-SubCell"/>
</dbReference>
<dbReference type="GO" id="GO:0005886">
    <property type="term" value="C:plasma membrane"/>
    <property type="evidence" value="ECO:0007669"/>
    <property type="project" value="InterPro"/>
</dbReference>
<dbReference type="GO" id="GO:0015419">
    <property type="term" value="F:ABC-type sulfate transporter activity"/>
    <property type="evidence" value="ECO:0007669"/>
    <property type="project" value="InterPro"/>
</dbReference>
<dbReference type="CDD" id="cd06261">
    <property type="entry name" value="TM_PBP2"/>
    <property type="match status" value="1"/>
</dbReference>
<dbReference type="FunFam" id="1.10.3720.10:FF:000004">
    <property type="entry name" value="Sulfate transport system permease protein CysT"/>
    <property type="match status" value="1"/>
</dbReference>
<dbReference type="Gene3D" id="1.10.3720.10">
    <property type="entry name" value="MetI-like"/>
    <property type="match status" value="1"/>
</dbReference>
<dbReference type="InterPro" id="IPR011865">
    <property type="entry name" value="CysT_permease"/>
</dbReference>
<dbReference type="InterPro" id="IPR000515">
    <property type="entry name" value="MetI-like"/>
</dbReference>
<dbReference type="InterPro" id="IPR035906">
    <property type="entry name" value="MetI-like_sf"/>
</dbReference>
<dbReference type="InterPro" id="IPR005667">
    <property type="entry name" value="Sulph_transpt2"/>
</dbReference>
<dbReference type="NCBIfam" id="TIGR00969">
    <property type="entry name" value="3a0106s02"/>
    <property type="match status" value="1"/>
</dbReference>
<dbReference type="NCBIfam" id="TIGR02139">
    <property type="entry name" value="permease_CysT"/>
    <property type="match status" value="1"/>
</dbReference>
<dbReference type="PANTHER" id="PTHR30406">
    <property type="entry name" value="SULFATE TRANSPORT SYSTEM PERMEASE PROTEIN"/>
    <property type="match status" value="1"/>
</dbReference>
<dbReference type="PANTHER" id="PTHR30406:SF8">
    <property type="entry name" value="SULFATE TRANSPORT SYSTEM PERMEASE PROTEIN CYST"/>
    <property type="match status" value="1"/>
</dbReference>
<dbReference type="Pfam" id="PF00528">
    <property type="entry name" value="BPD_transp_1"/>
    <property type="match status" value="1"/>
</dbReference>
<dbReference type="SUPFAM" id="SSF161098">
    <property type="entry name" value="MetI-like"/>
    <property type="match status" value="1"/>
</dbReference>
<dbReference type="PROSITE" id="PS50928">
    <property type="entry name" value="ABC_TM1"/>
    <property type="match status" value="1"/>
</dbReference>
<comment type="function">
    <text evidence="1">Part of the ABC transporter complex cysAWTP (TC 3.A.1.6.1) involved in sulfate/thiosulfate import. Probably responsible for the translocation of the substrate across the membrane (By similarity).</text>
</comment>
<comment type="subcellular location">
    <subcellularLocation>
        <location evidence="3">Plastid</location>
        <location evidence="3">Chloroplast membrane</location>
        <topology evidence="3">Multi-pass membrane protein</topology>
    </subcellularLocation>
</comment>
<comment type="similarity">
    <text evidence="3">Belongs to the binding-protein-dependent transport system permease family. CysTW subfamily.</text>
</comment>
<proteinExistence type="inferred from homology"/>
<organism>
    <name type="scientific">Zygnema circumcarinatum</name>
    <name type="common">Green alga</name>
    <dbReference type="NCBI Taxonomy" id="35869"/>
    <lineage>
        <taxon>Eukaryota</taxon>
        <taxon>Viridiplantae</taxon>
        <taxon>Streptophyta</taxon>
        <taxon>Zygnematophyceae</taxon>
        <taxon>Zygnematophycidae</taxon>
        <taxon>Zygnematales</taxon>
        <taxon>Zygnemataceae</taxon>
        <taxon>Zygnema</taxon>
    </lineage>
</organism>
<reference key="1">
    <citation type="journal article" date="2005" name="BMC Biol.">
        <title>The complete chloroplast DNA sequences of the charophycean green algae Staurastrum and Zygnema reveal that the chloroplast genome underwent extensive changes during the evolution of the Zygnematales.</title>
        <authorList>
            <person name="Turmel M."/>
            <person name="Otis C."/>
            <person name="Lemieux C."/>
        </authorList>
    </citation>
    <scope>NUCLEOTIDE SEQUENCE [LARGE SCALE GENOMIC DNA]</scope>
</reference>
<gene>
    <name type="primary">cysT</name>
</gene>
<geneLocation type="chloroplast"/>
<keyword id="KW-0150">Chloroplast</keyword>
<keyword id="KW-0472">Membrane</keyword>
<keyword id="KW-0934">Plastid</keyword>
<keyword id="KW-0764">Sulfate transport</keyword>
<keyword id="KW-0812">Transmembrane</keyword>
<keyword id="KW-1133">Transmembrane helix</keyword>
<keyword id="KW-0813">Transport</keyword>
<evidence type="ECO:0000250" key="1"/>
<evidence type="ECO:0000255" key="2">
    <source>
        <dbReference type="PROSITE-ProRule" id="PRU00441"/>
    </source>
</evidence>
<evidence type="ECO:0000305" key="3"/>
<feature type="chain" id="PRO_0000293978" description="Probable sulfate transport system permease protein cysT">
    <location>
        <begin position="1"/>
        <end position="288"/>
    </location>
</feature>
<feature type="transmembrane region" description="Helical" evidence="2">
    <location>
        <begin position="28"/>
        <end position="48"/>
    </location>
</feature>
<feature type="transmembrane region" description="Helical" evidence="2">
    <location>
        <begin position="77"/>
        <end position="97"/>
    </location>
</feature>
<feature type="transmembrane region" description="Helical" evidence="2">
    <location>
        <begin position="111"/>
        <end position="131"/>
    </location>
</feature>
<feature type="transmembrane region" description="Helical" evidence="2">
    <location>
        <begin position="149"/>
        <end position="169"/>
    </location>
</feature>
<feature type="transmembrane region" description="Helical" evidence="2">
    <location>
        <begin position="198"/>
        <end position="218"/>
    </location>
</feature>
<feature type="transmembrane region" description="Helical" evidence="2">
    <location>
        <begin position="227"/>
        <end position="247"/>
    </location>
</feature>
<feature type="transmembrane region" description="Helical" evidence="2">
    <location>
        <begin position="261"/>
        <end position="281"/>
    </location>
</feature>
<feature type="domain" description="ABC transmembrane type-1" evidence="2">
    <location>
        <begin position="73"/>
        <end position="276"/>
    </location>
</feature>
<protein>
    <recommendedName>
        <fullName>Probable sulfate transport system permease protein cysT</fullName>
    </recommendedName>
</protein>
<sequence>MILLCVISRTVLLNIRKRDIRFFTYFEFLLIAALHYGILILFLPVTALLLRTKEQSWYTIFQAVTEPVVLSAYKVTFLTAALAAVINAFLGLILAWILVRYRFPGKNFLDAAVDLPFALPTSVGGLTLMTVYSDKGWMGPICSWLGIKIAFSRLGVLIAMMFVSLPFIVRTIQPVLQSMEEETEEAAWCIGASPWTTFWNVLFPPMISPLLTGTALGFSRAIGEYGSIVLVASNIPMKDLVVSVLIFQRLEQYDYKGATAIASVVLLVSFAILLIINYIYLKRKSLTR</sequence>